<proteinExistence type="evidence at transcript level"/>
<evidence type="ECO:0000250" key="1"/>
<evidence type="ECO:0000305" key="2"/>
<protein>
    <recommendedName>
        <fullName>Cytochrome P450 2J6</fullName>
        <ecNumber>1.14.14.1</ecNumber>
    </recommendedName>
    <alternativeName>
        <fullName>Arachidonic acid epoxygenase</fullName>
    </alternativeName>
    <alternativeName>
        <fullName>CYPIIJ6</fullName>
    </alternativeName>
</protein>
<gene>
    <name type="primary">Cyp2j6</name>
</gene>
<accession>O54750</accession>
<accession>Q8BR78</accession>
<comment type="catalytic activity">
    <reaction>
        <text>an organic molecule + reduced [NADPH--hemoprotein reductase] + O2 = an alcohol + oxidized [NADPH--hemoprotein reductase] + H2O + H(+)</text>
        <dbReference type="Rhea" id="RHEA:17149"/>
        <dbReference type="Rhea" id="RHEA-COMP:11964"/>
        <dbReference type="Rhea" id="RHEA-COMP:11965"/>
        <dbReference type="ChEBI" id="CHEBI:15377"/>
        <dbReference type="ChEBI" id="CHEBI:15378"/>
        <dbReference type="ChEBI" id="CHEBI:15379"/>
        <dbReference type="ChEBI" id="CHEBI:30879"/>
        <dbReference type="ChEBI" id="CHEBI:57618"/>
        <dbReference type="ChEBI" id="CHEBI:58210"/>
        <dbReference type="ChEBI" id="CHEBI:142491"/>
        <dbReference type="EC" id="1.14.14.1"/>
    </reaction>
</comment>
<comment type="cofactor">
    <cofactor evidence="1">
        <name>heme</name>
        <dbReference type="ChEBI" id="CHEBI:30413"/>
    </cofactor>
</comment>
<comment type="subcellular location">
    <subcellularLocation>
        <location>Endoplasmic reticulum membrane</location>
        <topology>Peripheral membrane protein</topology>
    </subcellularLocation>
    <subcellularLocation>
        <location>Microsome membrane</location>
        <topology>Peripheral membrane protein</topology>
    </subcellularLocation>
</comment>
<comment type="similarity">
    <text evidence="2">Belongs to the cytochrome P450 family.</text>
</comment>
<reference key="1">
    <citation type="journal article" date="1998" name="Genomics">
        <title>Mapping of the CYP2J cytochrome P450 genes to human chromosome 1 and mouse chromosome 4.</title>
        <authorList>
            <person name="Ma J."/>
            <person name="Ramachandran S."/>
            <person name="Fiedorek F.T. Jr."/>
            <person name="Zeldin D.C."/>
        </authorList>
    </citation>
    <scope>NUCLEOTIDE SEQUENCE [MRNA]</scope>
    <source>
        <strain>C57BL/6 X CBA</strain>
        <tissue>Liver</tissue>
    </source>
</reference>
<reference key="2">
    <citation type="journal article" date="2005" name="Science">
        <title>The transcriptional landscape of the mammalian genome.</title>
        <authorList>
            <person name="Carninci P."/>
            <person name="Kasukawa T."/>
            <person name="Katayama S."/>
            <person name="Gough J."/>
            <person name="Frith M.C."/>
            <person name="Maeda N."/>
            <person name="Oyama R."/>
            <person name="Ravasi T."/>
            <person name="Lenhard B."/>
            <person name="Wells C."/>
            <person name="Kodzius R."/>
            <person name="Shimokawa K."/>
            <person name="Bajic V.B."/>
            <person name="Brenner S.E."/>
            <person name="Batalov S."/>
            <person name="Forrest A.R."/>
            <person name="Zavolan M."/>
            <person name="Davis M.J."/>
            <person name="Wilming L.G."/>
            <person name="Aidinis V."/>
            <person name="Allen J.E."/>
            <person name="Ambesi-Impiombato A."/>
            <person name="Apweiler R."/>
            <person name="Aturaliya R.N."/>
            <person name="Bailey T.L."/>
            <person name="Bansal M."/>
            <person name="Baxter L."/>
            <person name="Beisel K.W."/>
            <person name="Bersano T."/>
            <person name="Bono H."/>
            <person name="Chalk A.M."/>
            <person name="Chiu K.P."/>
            <person name="Choudhary V."/>
            <person name="Christoffels A."/>
            <person name="Clutterbuck D.R."/>
            <person name="Crowe M.L."/>
            <person name="Dalla E."/>
            <person name="Dalrymple B.P."/>
            <person name="de Bono B."/>
            <person name="Della Gatta G."/>
            <person name="di Bernardo D."/>
            <person name="Down T."/>
            <person name="Engstrom P."/>
            <person name="Fagiolini M."/>
            <person name="Faulkner G."/>
            <person name="Fletcher C.F."/>
            <person name="Fukushima T."/>
            <person name="Furuno M."/>
            <person name="Futaki S."/>
            <person name="Gariboldi M."/>
            <person name="Georgii-Hemming P."/>
            <person name="Gingeras T.R."/>
            <person name="Gojobori T."/>
            <person name="Green R.E."/>
            <person name="Gustincich S."/>
            <person name="Harbers M."/>
            <person name="Hayashi Y."/>
            <person name="Hensch T.K."/>
            <person name="Hirokawa N."/>
            <person name="Hill D."/>
            <person name="Huminiecki L."/>
            <person name="Iacono M."/>
            <person name="Ikeo K."/>
            <person name="Iwama A."/>
            <person name="Ishikawa T."/>
            <person name="Jakt M."/>
            <person name="Kanapin A."/>
            <person name="Katoh M."/>
            <person name="Kawasawa Y."/>
            <person name="Kelso J."/>
            <person name="Kitamura H."/>
            <person name="Kitano H."/>
            <person name="Kollias G."/>
            <person name="Krishnan S.P."/>
            <person name="Kruger A."/>
            <person name="Kummerfeld S.K."/>
            <person name="Kurochkin I.V."/>
            <person name="Lareau L.F."/>
            <person name="Lazarevic D."/>
            <person name="Lipovich L."/>
            <person name="Liu J."/>
            <person name="Liuni S."/>
            <person name="McWilliam S."/>
            <person name="Madan Babu M."/>
            <person name="Madera M."/>
            <person name="Marchionni L."/>
            <person name="Matsuda H."/>
            <person name="Matsuzawa S."/>
            <person name="Miki H."/>
            <person name="Mignone F."/>
            <person name="Miyake S."/>
            <person name="Morris K."/>
            <person name="Mottagui-Tabar S."/>
            <person name="Mulder N."/>
            <person name="Nakano N."/>
            <person name="Nakauchi H."/>
            <person name="Ng P."/>
            <person name="Nilsson R."/>
            <person name="Nishiguchi S."/>
            <person name="Nishikawa S."/>
            <person name="Nori F."/>
            <person name="Ohara O."/>
            <person name="Okazaki Y."/>
            <person name="Orlando V."/>
            <person name="Pang K.C."/>
            <person name="Pavan W.J."/>
            <person name="Pavesi G."/>
            <person name="Pesole G."/>
            <person name="Petrovsky N."/>
            <person name="Piazza S."/>
            <person name="Reed J."/>
            <person name="Reid J.F."/>
            <person name="Ring B.Z."/>
            <person name="Ringwald M."/>
            <person name="Rost B."/>
            <person name="Ruan Y."/>
            <person name="Salzberg S.L."/>
            <person name="Sandelin A."/>
            <person name="Schneider C."/>
            <person name="Schoenbach C."/>
            <person name="Sekiguchi K."/>
            <person name="Semple C.A."/>
            <person name="Seno S."/>
            <person name="Sessa L."/>
            <person name="Sheng Y."/>
            <person name="Shibata Y."/>
            <person name="Shimada H."/>
            <person name="Shimada K."/>
            <person name="Silva D."/>
            <person name="Sinclair B."/>
            <person name="Sperling S."/>
            <person name="Stupka E."/>
            <person name="Sugiura K."/>
            <person name="Sultana R."/>
            <person name="Takenaka Y."/>
            <person name="Taki K."/>
            <person name="Tammoja K."/>
            <person name="Tan S.L."/>
            <person name="Tang S."/>
            <person name="Taylor M.S."/>
            <person name="Tegner J."/>
            <person name="Teichmann S.A."/>
            <person name="Ueda H.R."/>
            <person name="van Nimwegen E."/>
            <person name="Verardo R."/>
            <person name="Wei C.L."/>
            <person name="Yagi K."/>
            <person name="Yamanishi H."/>
            <person name="Zabarovsky E."/>
            <person name="Zhu S."/>
            <person name="Zimmer A."/>
            <person name="Hide W."/>
            <person name="Bult C."/>
            <person name="Grimmond S.M."/>
            <person name="Teasdale R.D."/>
            <person name="Liu E.T."/>
            <person name="Brusic V."/>
            <person name="Quackenbush J."/>
            <person name="Wahlestedt C."/>
            <person name="Mattick J.S."/>
            <person name="Hume D.A."/>
            <person name="Kai C."/>
            <person name="Sasaki D."/>
            <person name="Tomaru Y."/>
            <person name="Fukuda S."/>
            <person name="Kanamori-Katayama M."/>
            <person name="Suzuki M."/>
            <person name="Aoki J."/>
            <person name="Arakawa T."/>
            <person name="Iida J."/>
            <person name="Imamura K."/>
            <person name="Itoh M."/>
            <person name="Kato T."/>
            <person name="Kawaji H."/>
            <person name="Kawagashira N."/>
            <person name="Kawashima T."/>
            <person name="Kojima M."/>
            <person name="Kondo S."/>
            <person name="Konno H."/>
            <person name="Nakano K."/>
            <person name="Ninomiya N."/>
            <person name="Nishio T."/>
            <person name="Okada M."/>
            <person name="Plessy C."/>
            <person name="Shibata K."/>
            <person name="Shiraki T."/>
            <person name="Suzuki S."/>
            <person name="Tagami M."/>
            <person name="Waki K."/>
            <person name="Watahiki A."/>
            <person name="Okamura-Oho Y."/>
            <person name="Suzuki H."/>
            <person name="Kawai J."/>
            <person name="Hayashizaki Y."/>
        </authorList>
    </citation>
    <scope>NUCLEOTIDE SEQUENCE [LARGE SCALE MRNA]</scope>
    <source>
        <strain>C57BL/6J</strain>
        <tissue>Corpora quadrigemina</tissue>
    </source>
</reference>
<reference key="3">
    <citation type="journal article" date="2009" name="PLoS Biol.">
        <title>Lineage-specific biology revealed by a finished genome assembly of the mouse.</title>
        <authorList>
            <person name="Church D.M."/>
            <person name="Goodstadt L."/>
            <person name="Hillier L.W."/>
            <person name="Zody M.C."/>
            <person name="Goldstein S."/>
            <person name="She X."/>
            <person name="Bult C.J."/>
            <person name="Agarwala R."/>
            <person name="Cherry J.L."/>
            <person name="DiCuccio M."/>
            <person name="Hlavina W."/>
            <person name="Kapustin Y."/>
            <person name="Meric P."/>
            <person name="Maglott D."/>
            <person name="Birtle Z."/>
            <person name="Marques A.C."/>
            <person name="Graves T."/>
            <person name="Zhou S."/>
            <person name="Teague B."/>
            <person name="Potamousis K."/>
            <person name="Churas C."/>
            <person name="Place M."/>
            <person name="Herschleb J."/>
            <person name="Runnheim R."/>
            <person name="Forrest D."/>
            <person name="Amos-Landgraf J."/>
            <person name="Schwartz D.C."/>
            <person name="Cheng Z."/>
            <person name="Lindblad-Toh K."/>
            <person name="Eichler E.E."/>
            <person name="Ponting C.P."/>
        </authorList>
    </citation>
    <scope>NUCLEOTIDE SEQUENCE [LARGE SCALE GENOMIC DNA]</scope>
    <source>
        <strain>C57BL/6J</strain>
    </source>
</reference>
<reference key="4">
    <citation type="submission" date="2005-07" db="EMBL/GenBank/DDBJ databases">
        <authorList>
            <person name="Mural R.J."/>
            <person name="Adams M.D."/>
            <person name="Myers E.W."/>
            <person name="Smith H.O."/>
            <person name="Venter J.C."/>
        </authorList>
    </citation>
    <scope>NUCLEOTIDE SEQUENCE [LARGE SCALE GENOMIC DNA]</scope>
</reference>
<reference key="5">
    <citation type="journal article" date="2004" name="Genome Res.">
        <title>The status, quality, and expansion of the NIH full-length cDNA project: the Mammalian Gene Collection (MGC).</title>
        <authorList>
            <consortium name="The MGC Project Team"/>
        </authorList>
    </citation>
    <scope>NUCLEOTIDE SEQUENCE [LARGE SCALE MRNA]</scope>
    <source>
        <tissue>Limb</tissue>
    </source>
</reference>
<sequence length="501" mass="57792">MLAATGSLLATIWAALHPRTLLVAAVTFLLLADYFKNRRPKNYPPGPWGLPFVGNIFQLDFGQPHLSIQPLVKKYGNIFSLNLGDITSVVITGLPLIKEALTQMEQNIMNRPLSVMQERISNKNGLIFSSGQIWKEQRRFALMTLRNFGLGKKSLEERMQEEASHLVEAIREEEGKPFNPHFSINNAVSNIICSVTFGERFDYHDSRFQEMLRLLDEVMYLETTMISQLYNIFPWIMKYIPGSHQKVFRNWEKLKLFVSCMIDDHRKDWNPDEPRDFIDAFLKEMTKYPEKTTSFNEENLICSTLDLFFAGTETTSTTLRWALLYMALYPEVQEKVQAEIDRVIGQKRAARLADRESMPYTNAVIHEVQRMGNIIPLNVPREVAMDTNLNGFHLPKGTMVLTNLTALHRDPKEWATPDVFNPEHFLENGQFKKRESFLPFSMGKRACLGEQLARSELFIFFTSLMQKFTFNPPINEKLSPKFRNGLTLSPVSHRICAVPRQ</sequence>
<dbReference type="EC" id="1.14.14.1"/>
<dbReference type="EMBL" id="U62295">
    <property type="protein sequence ID" value="AAB87636.1"/>
    <property type="molecule type" value="mRNA"/>
</dbReference>
<dbReference type="EMBL" id="AK045421">
    <property type="protein sequence ID" value="BAC32356.1"/>
    <property type="molecule type" value="mRNA"/>
</dbReference>
<dbReference type="EMBL" id="AK165663">
    <property type="protein sequence ID" value="BAE38325.1"/>
    <property type="molecule type" value="mRNA"/>
</dbReference>
<dbReference type="EMBL" id="AL683816">
    <property type="status" value="NOT_ANNOTATED_CDS"/>
    <property type="molecule type" value="Genomic_DNA"/>
</dbReference>
<dbReference type="EMBL" id="CH466527">
    <property type="protein sequence ID" value="EDL30913.1"/>
    <property type="molecule type" value="Genomic_DNA"/>
</dbReference>
<dbReference type="EMBL" id="BC050832">
    <property type="protein sequence ID" value="AAH50832.1"/>
    <property type="molecule type" value="mRNA"/>
</dbReference>
<dbReference type="CCDS" id="CCDS18369.1"/>
<dbReference type="RefSeq" id="NP_034138.3">
    <property type="nucleotide sequence ID" value="NM_010008.4"/>
</dbReference>
<dbReference type="SMR" id="O54750"/>
<dbReference type="FunCoup" id="O54750">
    <property type="interactions" value="1385"/>
</dbReference>
<dbReference type="STRING" id="10090.ENSMUSP00000030303"/>
<dbReference type="iPTMnet" id="O54750"/>
<dbReference type="PhosphoSitePlus" id="O54750"/>
<dbReference type="SwissPalm" id="O54750"/>
<dbReference type="jPOST" id="O54750"/>
<dbReference type="PaxDb" id="10090-ENSMUSP00000030303"/>
<dbReference type="PeptideAtlas" id="O54750"/>
<dbReference type="ProteomicsDB" id="283444"/>
<dbReference type="Pumba" id="O54750"/>
<dbReference type="DNASU" id="13110"/>
<dbReference type="Ensembl" id="ENSMUST00000030303.6">
    <property type="protein sequence ID" value="ENSMUSP00000030303.5"/>
    <property type="gene ID" value="ENSMUSG00000052914.5"/>
</dbReference>
<dbReference type="GeneID" id="13110"/>
<dbReference type="KEGG" id="mmu:13110"/>
<dbReference type="UCSC" id="uc008tti.2">
    <property type="organism name" value="mouse"/>
</dbReference>
<dbReference type="AGR" id="MGI:1270148"/>
<dbReference type="CTD" id="13110"/>
<dbReference type="MGI" id="MGI:1270148">
    <property type="gene designation" value="Cyp2j6"/>
</dbReference>
<dbReference type="VEuPathDB" id="HostDB:ENSMUSG00000052914"/>
<dbReference type="eggNOG" id="KOG0156">
    <property type="taxonomic scope" value="Eukaryota"/>
</dbReference>
<dbReference type="GeneTree" id="ENSGT00950000182879"/>
<dbReference type="HOGENOM" id="CLU_001570_22_0_1"/>
<dbReference type="InParanoid" id="O54750"/>
<dbReference type="OMA" id="LVTKGMH"/>
<dbReference type="OrthoDB" id="2789670at2759"/>
<dbReference type="PhylomeDB" id="O54750"/>
<dbReference type="TreeFam" id="TF352043"/>
<dbReference type="Reactome" id="R-MMU-211935">
    <property type="pathway name" value="Fatty acids"/>
</dbReference>
<dbReference type="Reactome" id="R-MMU-211981">
    <property type="pathway name" value="Xenobiotics"/>
</dbReference>
<dbReference type="Reactome" id="R-MMU-2142670">
    <property type="pathway name" value="Synthesis of epoxy (EET) and dihydroxyeicosatrienoic acids (DHET)"/>
</dbReference>
<dbReference type="BioGRID-ORCS" id="13110">
    <property type="hits" value="6 hits in 79 CRISPR screens"/>
</dbReference>
<dbReference type="ChiTaRS" id="Cyp2j6">
    <property type="organism name" value="mouse"/>
</dbReference>
<dbReference type="PRO" id="PR:O54750"/>
<dbReference type="Proteomes" id="UP000000589">
    <property type="component" value="Chromosome 4"/>
</dbReference>
<dbReference type="RNAct" id="O54750">
    <property type="molecule type" value="protein"/>
</dbReference>
<dbReference type="Bgee" id="ENSMUSG00000052914">
    <property type="expression patterns" value="Expressed in saccule of membranous labyrinth and 225 other cell types or tissues"/>
</dbReference>
<dbReference type="GO" id="GO:0005783">
    <property type="term" value="C:endoplasmic reticulum"/>
    <property type="evidence" value="ECO:0000314"/>
    <property type="project" value="MGI"/>
</dbReference>
<dbReference type="GO" id="GO:0005789">
    <property type="term" value="C:endoplasmic reticulum membrane"/>
    <property type="evidence" value="ECO:0007669"/>
    <property type="project" value="UniProtKB-SubCell"/>
</dbReference>
<dbReference type="GO" id="GO:0008392">
    <property type="term" value="F:arachidonate epoxygenase activity"/>
    <property type="evidence" value="ECO:0000315"/>
    <property type="project" value="MGI"/>
</dbReference>
<dbReference type="GO" id="GO:0020037">
    <property type="term" value="F:heme binding"/>
    <property type="evidence" value="ECO:0007669"/>
    <property type="project" value="InterPro"/>
</dbReference>
<dbReference type="GO" id="GO:0005506">
    <property type="term" value="F:iron ion binding"/>
    <property type="evidence" value="ECO:0007669"/>
    <property type="project" value="InterPro"/>
</dbReference>
<dbReference type="GO" id="GO:0003958">
    <property type="term" value="F:NADPH-hemoprotein reductase activity"/>
    <property type="evidence" value="ECO:0007669"/>
    <property type="project" value="Ensembl"/>
</dbReference>
<dbReference type="GO" id="GO:0016712">
    <property type="term" value="F:oxidoreductase activity, acting on paired donors, with incorporation or reduction of molecular oxygen, reduced flavin or flavoprotein as one donor, and incorporation of one atom of oxygen"/>
    <property type="evidence" value="ECO:0007669"/>
    <property type="project" value="UniProtKB-EC"/>
</dbReference>
<dbReference type="GO" id="GO:0019369">
    <property type="term" value="P:arachidonate metabolic process"/>
    <property type="evidence" value="ECO:0007669"/>
    <property type="project" value="Ensembl"/>
</dbReference>
<dbReference type="GO" id="GO:0007565">
    <property type="term" value="P:female pregnancy"/>
    <property type="evidence" value="ECO:0007669"/>
    <property type="project" value="Ensembl"/>
</dbReference>
<dbReference type="GO" id="GO:0032966">
    <property type="term" value="P:negative regulation of collagen biosynthetic process"/>
    <property type="evidence" value="ECO:0007669"/>
    <property type="project" value="Ensembl"/>
</dbReference>
<dbReference type="GO" id="GO:0035359">
    <property type="term" value="P:negative regulation of peroxisome proliferator activated receptor signaling pathway"/>
    <property type="evidence" value="ECO:0007669"/>
    <property type="project" value="Ensembl"/>
</dbReference>
<dbReference type="GO" id="GO:1903055">
    <property type="term" value="P:positive regulation of extracellular matrix organization"/>
    <property type="evidence" value="ECO:0007669"/>
    <property type="project" value="Ensembl"/>
</dbReference>
<dbReference type="GO" id="GO:0045722">
    <property type="term" value="P:positive regulation of gluconeogenesis"/>
    <property type="evidence" value="ECO:0007669"/>
    <property type="project" value="Ensembl"/>
</dbReference>
<dbReference type="GO" id="GO:0032760">
    <property type="term" value="P:positive regulation of tumor necrosis factor production"/>
    <property type="evidence" value="ECO:0007669"/>
    <property type="project" value="Ensembl"/>
</dbReference>
<dbReference type="GO" id="GO:0001523">
    <property type="term" value="P:retinoid metabolic process"/>
    <property type="evidence" value="ECO:0007669"/>
    <property type="project" value="Ensembl"/>
</dbReference>
<dbReference type="CDD" id="cd20662">
    <property type="entry name" value="CYP2J"/>
    <property type="match status" value="1"/>
</dbReference>
<dbReference type="FunFam" id="1.10.630.10:FF:000004">
    <property type="entry name" value="cytochrome P450 2D15 isoform X1"/>
    <property type="match status" value="1"/>
</dbReference>
<dbReference type="Gene3D" id="1.10.630.10">
    <property type="entry name" value="Cytochrome P450"/>
    <property type="match status" value="1"/>
</dbReference>
<dbReference type="InterPro" id="IPR001128">
    <property type="entry name" value="Cyt_P450"/>
</dbReference>
<dbReference type="InterPro" id="IPR017972">
    <property type="entry name" value="Cyt_P450_CS"/>
</dbReference>
<dbReference type="InterPro" id="IPR002401">
    <property type="entry name" value="Cyt_P450_E_grp-I"/>
</dbReference>
<dbReference type="InterPro" id="IPR008071">
    <property type="entry name" value="Cyt_P450_E_grp-I_CYP2J-like"/>
</dbReference>
<dbReference type="InterPro" id="IPR036396">
    <property type="entry name" value="Cyt_P450_sf"/>
</dbReference>
<dbReference type="InterPro" id="IPR050182">
    <property type="entry name" value="Cytochrome_P450_fam2"/>
</dbReference>
<dbReference type="PANTHER" id="PTHR24300:SF177">
    <property type="entry name" value="CYTOCHROME P450 2J2"/>
    <property type="match status" value="1"/>
</dbReference>
<dbReference type="PANTHER" id="PTHR24300">
    <property type="entry name" value="CYTOCHROME P450 508A4-RELATED"/>
    <property type="match status" value="1"/>
</dbReference>
<dbReference type="Pfam" id="PF00067">
    <property type="entry name" value="p450"/>
    <property type="match status" value="1"/>
</dbReference>
<dbReference type="PRINTS" id="PR00463">
    <property type="entry name" value="EP450I"/>
</dbReference>
<dbReference type="PRINTS" id="PR01688">
    <property type="entry name" value="EP450ICYP2J"/>
</dbReference>
<dbReference type="PRINTS" id="PR00385">
    <property type="entry name" value="P450"/>
</dbReference>
<dbReference type="SUPFAM" id="SSF48264">
    <property type="entry name" value="Cytochrome P450"/>
    <property type="match status" value="1"/>
</dbReference>
<dbReference type="PROSITE" id="PS00086">
    <property type="entry name" value="CYTOCHROME_P450"/>
    <property type="match status" value="1"/>
</dbReference>
<feature type="chain" id="PRO_0000051772" description="Cytochrome P450 2J6">
    <location>
        <begin position="1"/>
        <end position="501"/>
    </location>
</feature>
<feature type="binding site" description="axial binding residue" evidence="1">
    <location>
        <position position="447"/>
    </location>
    <ligand>
        <name>heme</name>
        <dbReference type="ChEBI" id="CHEBI:30413"/>
    </ligand>
    <ligandPart>
        <name>Fe</name>
        <dbReference type="ChEBI" id="CHEBI:18248"/>
    </ligandPart>
</feature>
<feature type="sequence conflict" description="In Ref. 1; AAB87636." evidence="2" ref="1">
    <original>Q</original>
    <variation>R</variation>
    <location>
        <position position="369"/>
    </location>
</feature>
<name>CP2J6_MOUSE</name>
<keyword id="KW-0256">Endoplasmic reticulum</keyword>
<keyword id="KW-0349">Heme</keyword>
<keyword id="KW-0408">Iron</keyword>
<keyword id="KW-0472">Membrane</keyword>
<keyword id="KW-0479">Metal-binding</keyword>
<keyword id="KW-0492">Microsome</keyword>
<keyword id="KW-0503">Monooxygenase</keyword>
<keyword id="KW-0560">Oxidoreductase</keyword>
<keyword id="KW-1185">Reference proteome</keyword>
<organism>
    <name type="scientific">Mus musculus</name>
    <name type="common">Mouse</name>
    <dbReference type="NCBI Taxonomy" id="10090"/>
    <lineage>
        <taxon>Eukaryota</taxon>
        <taxon>Metazoa</taxon>
        <taxon>Chordata</taxon>
        <taxon>Craniata</taxon>
        <taxon>Vertebrata</taxon>
        <taxon>Euteleostomi</taxon>
        <taxon>Mammalia</taxon>
        <taxon>Eutheria</taxon>
        <taxon>Euarchontoglires</taxon>
        <taxon>Glires</taxon>
        <taxon>Rodentia</taxon>
        <taxon>Myomorpha</taxon>
        <taxon>Muroidea</taxon>
        <taxon>Muridae</taxon>
        <taxon>Murinae</taxon>
        <taxon>Mus</taxon>
        <taxon>Mus</taxon>
    </lineage>
</organism>